<reference key="1">
    <citation type="journal article" date="2005" name="Science">
        <title>Life at depth: Photobacterium profundum genome sequence and expression analysis.</title>
        <authorList>
            <person name="Vezzi A."/>
            <person name="Campanaro S."/>
            <person name="D'Angelo M."/>
            <person name="Simonato F."/>
            <person name="Vitulo N."/>
            <person name="Lauro F.M."/>
            <person name="Cestaro A."/>
            <person name="Malacrida G."/>
            <person name="Simionati B."/>
            <person name="Cannata N."/>
            <person name="Romualdi C."/>
            <person name="Bartlett D.H."/>
            <person name="Valle G."/>
        </authorList>
    </citation>
    <scope>NUCLEOTIDE SEQUENCE [LARGE SCALE GENOMIC DNA]</scope>
    <source>
        <strain>ATCC BAA-1253 / SS9</strain>
    </source>
</reference>
<evidence type="ECO:0000255" key="1">
    <source>
        <dbReference type="HAMAP-Rule" id="MF_00340"/>
    </source>
</evidence>
<evidence type="ECO:0000256" key="2">
    <source>
        <dbReference type="SAM" id="MobiDB-lite"/>
    </source>
</evidence>
<evidence type="ECO:0000305" key="3"/>
<protein>
    <recommendedName>
        <fullName evidence="1">Large ribosomal subunit protein bL32</fullName>
    </recommendedName>
    <alternativeName>
        <fullName evidence="3">50S ribosomal protein L32</fullName>
    </alternativeName>
</protein>
<accession>Q6LSX4</accession>
<comment type="similarity">
    <text evidence="1">Belongs to the bacterial ribosomal protein bL32 family.</text>
</comment>
<proteinExistence type="inferred from homology"/>
<dbReference type="EMBL" id="CR378666">
    <property type="protein sequence ID" value="CAG19602.1"/>
    <property type="molecule type" value="Genomic_DNA"/>
</dbReference>
<dbReference type="RefSeq" id="WP_006231206.1">
    <property type="nucleotide sequence ID" value="NC_006370.1"/>
</dbReference>
<dbReference type="SMR" id="Q6LSX4"/>
<dbReference type="STRING" id="298386.PBPRA1191"/>
<dbReference type="GeneID" id="93547961"/>
<dbReference type="KEGG" id="ppr:PBPRA1191"/>
<dbReference type="eggNOG" id="COG0333">
    <property type="taxonomic scope" value="Bacteria"/>
</dbReference>
<dbReference type="HOGENOM" id="CLU_129084_2_1_6"/>
<dbReference type="Proteomes" id="UP000000593">
    <property type="component" value="Chromosome 1"/>
</dbReference>
<dbReference type="GO" id="GO:0015934">
    <property type="term" value="C:large ribosomal subunit"/>
    <property type="evidence" value="ECO:0007669"/>
    <property type="project" value="InterPro"/>
</dbReference>
<dbReference type="GO" id="GO:0003735">
    <property type="term" value="F:structural constituent of ribosome"/>
    <property type="evidence" value="ECO:0007669"/>
    <property type="project" value="InterPro"/>
</dbReference>
<dbReference type="GO" id="GO:0006412">
    <property type="term" value="P:translation"/>
    <property type="evidence" value="ECO:0007669"/>
    <property type="project" value="UniProtKB-UniRule"/>
</dbReference>
<dbReference type="HAMAP" id="MF_00340">
    <property type="entry name" value="Ribosomal_bL32"/>
    <property type="match status" value="1"/>
</dbReference>
<dbReference type="InterPro" id="IPR002677">
    <property type="entry name" value="Ribosomal_bL32"/>
</dbReference>
<dbReference type="InterPro" id="IPR044957">
    <property type="entry name" value="Ribosomal_bL32_bact"/>
</dbReference>
<dbReference type="InterPro" id="IPR011332">
    <property type="entry name" value="Ribosomal_zn-bd"/>
</dbReference>
<dbReference type="NCBIfam" id="TIGR01031">
    <property type="entry name" value="rpmF_bact"/>
    <property type="match status" value="1"/>
</dbReference>
<dbReference type="PANTHER" id="PTHR35534">
    <property type="entry name" value="50S RIBOSOMAL PROTEIN L32"/>
    <property type="match status" value="1"/>
</dbReference>
<dbReference type="PANTHER" id="PTHR35534:SF1">
    <property type="entry name" value="LARGE RIBOSOMAL SUBUNIT PROTEIN BL32"/>
    <property type="match status" value="1"/>
</dbReference>
<dbReference type="Pfam" id="PF01783">
    <property type="entry name" value="Ribosomal_L32p"/>
    <property type="match status" value="1"/>
</dbReference>
<dbReference type="SUPFAM" id="SSF57829">
    <property type="entry name" value="Zn-binding ribosomal proteins"/>
    <property type="match status" value="1"/>
</dbReference>
<name>RL32_PHOPR</name>
<gene>
    <name evidence="1" type="primary">rpmF</name>
    <name type="ordered locus">PBPRA1191</name>
</gene>
<keyword id="KW-1185">Reference proteome</keyword>
<keyword id="KW-0687">Ribonucleoprotein</keyword>
<keyword id="KW-0689">Ribosomal protein</keyword>
<organism>
    <name type="scientific">Photobacterium profundum (strain SS9)</name>
    <dbReference type="NCBI Taxonomy" id="298386"/>
    <lineage>
        <taxon>Bacteria</taxon>
        <taxon>Pseudomonadati</taxon>
        <taxon>Pseudomonadota</taxon>
        <taxon>Gammaproteobacteria</taxon>
        <taxon>Vibrionales</taxon>
        <taxon>Vibrionaceae</taxon>
        <taxon>Photobacterium</taxon>
    </lineage>
</organism>
<feature type="chain" id="PRO_0000172383" description="Large ribosomal subunit protein bL32">
    <location>
        <begin position="1"/>
        <end position="56"/>
    </location>
</feature>
<feature type="region of interest" description="Disordered" evidence="2">
    <location>
        <begin position="1"/>
        <end position="22"/>
    </location>
</feature>
<feature type="compositionally biased region" description="Basic residues" evidence="2">
    <location>
        <begin position="1"/>
        <end position="16"/>
    </location>
</feature>
<sequence length="56" mass="6149">MAVQKSKKSRAARGMRRSHDALTTAAVSVDSASGETHLRHHVTADGFYRGRKVINK</sequence>